<evidence type="ECO:0000255" key="1">
    <source>
        <dbReference type="HAMAP-Rule" id="MF_03055"/>
    </source>
</evidence>
<evidence type="ECO:0000256" key="2">
    <source>
        <dbReference type="SAM" id="MobiDB-lite"/>
    </source>
</evidence>
<gene>
    <name type="ORF">GE16980</name>
</gene>
<sequence length="256" mass="29264">MVATGGQAQDQSHNQEPGVLCPTSAVTGLPQKRYYRQRAHSNPIADHSFDYPARPEDVDWRSMYPSIQQGQQVSFADIGCGYGGFLITLGEMFPEKLSIGMEIRVKVSDYVVDRIAALRRKGADTGAYQNVACLRTNAMKYLPNYFAKGQLEKMFFLYPDPHFKRAKHKWRIINQALLSEYAYVLRKGGLVYTMTDVEDLHKWIVAHMEEHPLYERLTEEEANADPITPKLYQSSEEGAKVVRNKGDHFLAIFRRL</sequence>
<dbReference type="EC" id="2.1.1.33" evidence="1"/>
<dbReference type="EMBL" id="CM000162">
    <property type="protein sequence ID" value="EDX01423.1"/>
    <property type="molecule type" value="Genomic_DNA"/>
</dbReference>
<dbReference type="SMR" id="B4Q1B6"/>
<dbReference type="EnsemblMetazoa" id="FBtr0263498">
    <property type="protein sequence ID" value="FBpp0261990"/>
    <property type="gene ID" value="FBgn0068318"/>
</dbReference>
<dbReference type="EnsemblMetazoa" id="XM_002100279.4">
    <property type="protein sequence ID" value="XP_002100315.1"/>
    <property type="gene ID" value="LOC6524458"/>
</dbReference>
<dbReference type="GeneID" id="6524458"/>
<dbReference type="KEGG" id="dya:Dyak_GE16980"/>
<dbReference type="eggNOG" id="KOG3115">
    <property type="taxonomic scope" value="Eukaryota"/>
</dbReference>
<dbReference type="HOGENOM" id="CLU_050910_3_1_1"/>
<dbReference type="OMA" id="LPNYFAK"/>
<dbReference type="OrthoDB" id="47276at2759"/>
<dbReference type="PhylomeDB" id="B4Q1B6"/>
<dbReference type="UniPathway" id="UPA00989"/>
<dbReference type="Proteomes" id="UP000002282">
    <property type="component" value="Chromosome X"/>
</dbReference>
<dbReference type="GO" id="GO:0005634">
    <property type="term" value="C:nucleus"/>
    <property type="evidence" value="ECO:0007669"/>
    <property type="project" value="UniProtKB-SubCell"/>
</dbReference>
<dbReference type="GO" id="GO:0106143">
    <property type="term" value="C:tRNA (m7G46) methyltransferase complex"/>
    <property type="evidence" value="ECO:0007669"/>
    <property type="project" value="EnsemblMetazoa"/>
</dbReference>
<dbReference type="GO" id="GO:0008176">
    <property type="term" value="F:tRNA (guanine(46)-N7)-methyltransferase activity"/>
    <property type="evidence" value="ECO:0007669"/>
    <property type="project" value="UniProtKB-UniRule"/>
</dbReference>
<dbReference type="GO" id="GO:0000049">
    <property type="term" value="F:tRNA binding"/>
    <property type="evidence" value="ECO:0007669"/>
    <property type="project" value="UniProtKB-UniRule"/>
</dbReference>
<dbReference type="FunFam" id="3.40.50.150:FF:000060">
    <property type="entry name" value="tRNA (guanine-N(7)-)-methyltransferase"/>
    <property type="match status" value="1"/>
</dbReference>
<dbReference type="Gene3D" id="3.40.50.150">
    <property type="entry name" value="Vaccinia Virus protein VP39"/>
    <property type="match status" value="1"/>
</dbReference>
<dbReference type="HAMAP" id="MF_03055">
    <property type="entry name" value="tRNA_methyltr_TrmB_euk"/>
    <property type="match status" value="1"/>
</dbReference>
<dbReference type="InterPro" id="IPR029063">
    <property type="entry name" value="SAM-dependent_MTases_sf"/>
</dbReference>
<dbReference type="InterPro" id="IPR025763">
    <property type="entry name" value="Trm8_euk"/>
</dbReference>
<dbReference type="InterPro" id="IPR003358">
    <property type="entry name" value="tRNA_(Gua-N-7)_MeTrfase_Trmb"/>
</dbReference>
<dbReference type="NCBIfam" id="TIGR00091">
    <property type="entry name" value="tRNA (guanosine(46)-N7)-methyltransferase TrmB"/>
    <property type="match status" value="1"/>
</dbReference>
<dbReference type="PANTHER" id="PTHR23417">
    <property type="entry name" value="3-DEOXY-D-MANNO-OCTULOSONIC-ACID TRANSFERASE/TRNA GUANINE-N 7 - -METHYLTRANSFERASE"/>
    <property type="match status" value="1"/>
</dbReference>
<dbReference type="PANTHER" id="PTHR23417:SF16">
    <property type="entry name" value="TRNA (GUANINE-N(7)-)-METHYLTRANSFERASE"/>
    <property type="match status" value="1"/>
</dbReference>
<dbReference type="Pfam" id="PF02390">
    <property type="entry name" value="Methyltransf_4"/>
    <property type="match status" value="1"/>
</dbReference>
<dbReference type="SUPFAM" id="SSF53335">
    <property type="entry name" value="S-adenosyl-L-methionine-dependent methyltransferases"/>
    <property type="match status" value="1"/>
</dbReference>
<dbReference type="PROSITE" id="PS51625">
    <property type="entry name" value="SAM_MT_TRMB"/>
    <property type="match status" value="1"/>
</dbReference>
<name>TRMB_DROYA</name>
<organism>
    <name type="scientific">Drosophila yakuba</name>
    <name type="common">Fruit fly</name>
    <dbReference type="NCBI Taxonomy" id="7245"/>
    <lineage>
        <taxon>Eukaryota</taxon>
        <taxon>Metazoa</taxon>
        <taxon>Ecdysozoa</taxon>
        <taxon>Arthropoda</taxon>
        <taxon>Hexapoda</taxon>
        <taxon>Insecta</taxon>
        <taxon>Pterygota</taxon>
        <taxon>Neoptera</taxon>
        <taxon>Endopterygota</taxon>
        <taxon>Diptera</taxon>
        <taxon>Brachycera</taxon>
        <taxon>Muscomorpha</taxon>
        <taxon>Ephydroidea</taxon>
        <taxon>Drosophilidae</taxon>
        <taxon>Drosophila</taxon>
        <taxon>Sophophora</taxon>
    </lineage>
</organism>
<feature type="chain" id="PRO_0000370578" description="tRNA (guanine-N(7)-)-methyltransferase">
    <location>
        <begin position="1"/>
        <end position="256"/>
    </location>
</feature>
<feature type="region of interest" description="Disordered" evidence="2">
    <location>
        <begin position="1"/>
        <end position="22"/>
    </location>
</feature>
<feature type="compositionally biased region" description="Polar residues" evidence="2">
    <location>
        <begin position="1"/>
        <end position="15"/>
    </location>
</feature>
<feature type="active site" evidence="1">
    <location>
        <position position="160"/>
    </location>
</feature>
<feature type="binding site" evidence="1">
    <location>
        <position position="79"/>
    </location>
    <ligand>
        <name>S-adenosyl-L-methionine</name>
        <dbReference type="ChEBI" id="CHEBI:59789"/>
    </ligand>
</feature>
<feature type="binding site" evidence="1">
    <location>
        <begin position="102"/>
        <end position="103"/>
    </location>
    <ligand>
        <name>S-adenosyl-L-methionine</name>
        <dbReference type="ChEBI" id="CHEBI:59789"/>
    </ligand>
</feature>
<feature type="binding site" evidence="1">
    <location>
        <begin position="137"/>
        <end position="138"/>
    </location>
    <ligand>
        <name>S-adenosyl-L-methionine</name>
        <dbReference type="ChEBI" id="CHEBI:59789"/>
    </ligand>
</feature>
<feature type="binding site" evidence="1">
    <location>
        <position position="157"/>
    </location>
    <ligand>
        <name>S-adenosyl-L-methionine</name>
        <dbReference type="ChEBI" id="CHEBI:59789"/>
    </ligand>
</feature>
<feature type="binding site" evidence="1">
    <location>
        <begin position="235"/>
        <end position="237"/>
    </location>
    <ligand>
        <name>S-adenosyl-L-methionine</name>
        <dbReference type="ChEBI" id="CHEBI:59789"/>
    </ligand>
</feature>
<protein>
    <recommendedName>
        <fullName evidence="1">tRNA (guanine-N(7)-)-methyltransferase</fullName>
        <ecNumber evidence="1">2.1.1.33</ecNumber>
    </recommendedName>
    <alternativeName>
        <fullName evidence="1">tRNA (guanine(46)-N(7))-methyltransferase</fullName>
    </alternativeName>
    <alternativeName>
        <fullName evidence="1">tRNA(m7G46)-methyltransferase</fullName>
    </alternativeName>
</protein>
<keyword id="KW-0489">Methyltransferase</keyword>
<keyword id="KW-0539">Nucleus</keyword>
<keyword id="KW-0694">RNA-binding</keyword>
<keyword id="KW-0949">S-adenosyl-L-methionine</keyword>
<keyword id="KW-0808">Transferase</keyword>
<keyword id="KW-0819">tRNA processing</keyword>
<keyword id="KW-0820">tRNA-binding</keyword>
<reference key="1">
    <citation type="journal article" date="2007" name="Nature">
        <title>Evolution of genes and genomes on the Drosophila phylogeny.</title>
        <authorList>
            <consortium name="Drosophila 12 genomes consortium"/>
        </authorList>
    </citation>
    <scope>NUCLEOTIDE SEQUENCE [LARGE SCALE GENOMIC DNA]</scope>
    <source>
        <strain>Tai18E2 / Tucson 14021-0261.01</strain>
    </source>
</reference>
<proteinExistence type="inferred from homology"/>
<comment type="function">
    <text evidence="1">Catalyzes the formation of N(7)-methylguanine at position 46 (m7G46) in tRNA.</text>
</comment>
<comment type="catalytic activity">
    <reaction evidence="1">
        <text>guanosine(46) in tRNA + S-adenosyl-L-methionine = N(7)-methylguanosine(46) in tRNA + S-adenosyl-L-homocysteine</text>
        <dbReference type="Rhea" id="RHEA:42708"/>
        <dbReference type="Rhea" id="RHEA-COMP:10188"/>
        <dbReference type="Rhea" id="RHEA-COMP:10189"/>
        <dbReference type="ChEBI" id="CHEBI:57856"/>
        <dbReference type="ChEBI" id="CHEBI:59789"/>
        <dbReference type="ChEBI" id="CHEBI:74269"/>
        <dbReference type="ChEBI" id="CHEBI:74480"/>
        <dbReference type="EC" id="2.1.1.33"/>
    </reaction>
</comment>
<comment type="pathway">
    <text evidence="1">tRNA modification; N(7)-methylguanine-tRNA biosynthesis.</text>
</comment>
<comment type="subcellular location">
    <subcellularLocation>
        <location evidence="1">Nucleus</location>
    </subcellularLocation>
</comment>
<comment type="similarity">
    <text evidence="1">Belongs to the class I-like SAM-binding methyltransferase superfamily. TrmB family.</text>
</comment>
<accession>B4Q1B6</accession>